<keyword id="KW-0963">Cytoplasm</keyword>
<keyword id="KW-0227">DNA damage</keyword>
<keyword id="KW-0228">DNA excision</keyword>
<keyword id="KW-0234">DNA repair</keyword>
<keyword id="KW-0267">Excision nuclease</keyword>
<keyword id="KW-1185">Reference proteome</keyword>
<keyword id="KW-0742">SOS response</keyword>
<gene>
    <name evidence="1" type="primary">uvrC</name>
    <name type="ordered locus">BPSL2420</name>
</gene>
<accession>Q63SA4</accession>
<proteinExistence type="inferred from homology"/>
<comment type="function">
    <text evidence="1">The UvrABC repair system catalyzes the recognition and processing of DNA lesions. UvrC both incises the 5' and 3' sides of the lesion. The N-terminal half is responsible for the 3' incision and the C-terminal half is responsible for the 5' incision.</text>
</comment>
<comment type="subunit">
    <text evidence="1">Interacts with UvrB in an incision complex.</text>
</comment>
<comment type="subcellular location">
    <subcellularLocation>
        <location evidence="1">Cytoplasm</location>
    </subcellularLocation>
</comment>
<comment type="similarity">
    <text evidence="1">Belongs to the UvrC family.</text>
</comment>
<comment type="sequence caution" evidence="2">
    <conflict type="erroneous initiation">
        <sequence resource="EMBL-CDS" id="CAH36423"/>
    </conflict>
</comment>
<dbReference type="EMBL" id="BX571965">
    <property type="protein sequence ID" value="CAH36423.1"/>
    <property type="status" value="ALT_INIT"/>
    <property type="molecule type" value="Genomic_DNA"/>
</dbReference>
<dbReference type="RefSeq" id="WP_004550145.1">
    <property type="nucleotide sequence ID" value="NZ_CP009538.1"/>
</dbReference>
<dbReference type="RefSeq" id="YP_109012.1">
    <property type="nucleotide sequence ID" value="NC_006350.1"/>
</dbReference>
<dbReference type="SMR" id="Q63SA4"/>
<dbReference type="STRING" id="272560.BPSL2420"/>
<dbReference type="KEGG" id="bps:BPSL2420"/>
<dbReference type="PATRIC" id="fig|272560.51.peg.2972"/>
<dbReference type="eggNOG" id="COG0322">
    <property type="taxonomic scope" value="Bacteria"/>
</dbReference>
<dbReference type="Proteomes" id="UP000000605">
    <property type="component" value="Chromosome 1"/>
</dbReference>
<dbReference type="GO" id="GO:0005737">
    <property type="term" value="C:cytoplasm"/>
    <property type="evidence" value="ECO:0007669"/>
    <property type="project" value="UniProtKB-SubCell"/>
</dbReference>
<dbReference type="GO" id="GO:0009380">
    <property type="term" value="C:excinuclease repair complex"/>
    <property type="evidence" value="ECO:0007669"/>
    <property type="project" value="InterPro"/>
</dbReference>
<dbReference type="GO" id="GO:0003677">
    <property type="term" value="F:DNA binding"/>
    <property type="evidence" value="ECO:0007669"/>
    <property type="project" value="UniProtKB-UniRule"/>
</dbReference>
<dbReference type="GO" id="GO:0009381">
    <property type="term" value="F:excinuclease ABC activity"/>
    <property type="evidence" value="ECO:0007669"/>
    <property type="project" value="UniProtKB-UniRule"/>
</dbReference>
<dbReference type="GO" id="GO:0006289">
    <property type="term" value="P:nucleotide-excision repair"/>
    <property type="evidence" value="ECO:0007669"/>
    <property type="project" value="UniProtKB-UniRule"/>
</dbReference>
<dbReference type="GO" id="GO:0009432">
    <property type="term" value="P:SOS response"/>
    <property type="evidence" value="ECO:0007669"/>
    <property type="project" value="UniProtKB-UniRule"/>
</dbReference>
<dbReference type="CDD" id="cd10434">
    <property type="entry name" value="GIY-YIG_UvrC_Cho"/>
    <property type="match status" value="1"/>
</dbReference>
<dbReference type="FunFam" id="3.30.420.340:FF:000001">
    <property type="entry name" value="UvrABC system protein C"/>
    <property type="match status" value="1"/>
</dbReference>
<dbReference type="FunFam" id="3.40.1440.10:FF:000001">
    <property type="entry name" value="UvrABC system protein C"/>
    <property type="match status" value="1"/>
</dbReference>
<dbReference type="Gene3D" id="1.10.150.20">
    <property type="entry name" value="5' to 3' exonuclease, C-terminal subdomain"/>
    <property type="match status" value="1"/>
</dbReference>
<dbReference type="Gene3D" id="3.40.1440.10">
    <property type="entry name" value="GIY-YIG endonuclease"/>
    <property type="match status" value="1"/>
</dbReference>
<dbReference type="Gene3D" id="4.10.860.10">
    <property type="entry name" value="UVR domain"/>
    <property type="match status" value="1"/>
</dbReference>
<dbReference type="Gene3D" id="3.30.420.340">
    <property type="entry name" value="UvrC, RNAse H endonuclease domain"/>
    <property type="match status" value="1"/>
</dbReference>
<dbReference type="HAMAP" id="MF_00203">
    <property type="entry name" value="UvrC"/>
    <property type="match status" value="1"/>
</dbReference>
<dbReference type="InterPro" id="IPR000305">
    <property type="entry name" value="GIY-YIG_endonuc"/>
</dbReference>
<dbReference type="InterPro" id="IPR035901">
    <property type="entry name" value="GIY-YIG_endonuc_sf"/>
</dbReference>
<dbReference type="InterPro" id="IPR047296">
    <property type="entry name" value="GIY-YIG_UvrC_Cho"/>
</dbReference>
<dbReference type="InterPro" id="IPR003583">
    <property type="entry name" value="Hlx-hairpin-Hlx_DNA-bd_motif"/>
</dbReference>
<dbReference type="InterPro" id="IPR010994">
    <property type="entry name" value="RuvA_2-like"/>
</dbReference>
<dbReference type="InterPro" id="IPR001943">
    <property type="entry name" value="UVR_dom"/>
</dbReference>
<dbReference type="InterPro" id="IPR036876">
    <property type="entry name" value="UVR_dom_sf"/>
</dbReference>
<dbReference type="InterPro" id="IPR050066">
    <property type="entry name" value="UvrABC_protein_C"/>
</dbReference>
<dbReference type="InterPro" id="IPR004791">
    <property type="entry name" value="UvrC"/>
</dbReference>
<dbReference type="InterPro" id="IPR001162">
    <property type="entry name" value="UvrC_RNase_H_dom"/>
</dbReference>
<dbReference type="InterPro" id="IPR038476">
    <property type="entry name" value="UvrC_RNase_H_dom_sf"/>
</dbReference>
<dbReference type="NCBIfam" id="NF001824">
    <property type="entry name" value="PRK00558.1-5"/>
    <property type="match status" value="1"/>
</dbReference>
<dbReference type="NCBIfam" id="TIGR00194">
    <property type="entry name" value="uvrC"/>
    <property type="match status" value="1"/>
</dbReference>
<dbReference type="PANTHER" id="PTHR30562:SF1">
    <property type="entry name" value="UVRABC SYSTEM PROTEIN C"/>
    <property type="match status" value="1"/>
</dbReference>
<dbReference type="PANTHER" id="PTHR30562">
    <property type="entry name" value="UVRC/OXIDOREDUCTASE"/>
    <property type="match status" value="1"/>
</dbReference>
<dbReference type="Pfam" id="PF01541">
    <property type="entry name" value="GIY-YIG"/>
    <property type="match status" value="1"/>
</dbReference>
<dbReference type="Pfam" id="PF14520">
    <property type="entry name" value="HHH_5"/>
    <property type="match status" value="1"/>
</dbReference>
<dbReference type="Pfam" id="PF02151">
    <property type="entry name" value="UVR"/>
    <property type="match status" value="1"/>
</dbReference>
<dbReference type="Pfam" id="PF22920">
    <property type="entry name" value="UvrC_RNaseH"/>
    <property type="match status" value="2"/>
</dbReference>
<dbReference type="Pfam" id="PF08459">
    <property type="entry name" value="UvrC_RNaseH_dom"/>
    <property type="match status" value="1"/>
</dbReference>
<dbReference type="SMART" id="SM00465">
    <property type="entry name" value="GIYc"/>
    <property type="match status" value="1"/>
</dbReference>
<dbReference type="SMART" id="SM00278">
    <property type="entry name" value="HhH1"/>
    <property type="match status" value="2"/>
</dbReference>
<dbReference type="SUPFAM" id="SSF46600">
    <property type="entry name" value="C-terminal UvrC-binding domain of UvrB"/>
    <property type="match status" value="1"/>
</dbReference>
<dbReference type="SUPFAM" id="SSF82771">
    <property type="entry name" value="GIY-YIG endonuclease"/>
    <property type="match status" value="1"/>
</dbReference>
<dbReference type="SUPFAM" id="SSF47781">
    <property type="entry name" value="RuvA domain 2-like"/>
    <property type="match status" value="1"/>
</dbReference>
<dbReference type="PROSITE" id="PS50164">
    <property type="entry name" value="GIY_YIG"/>
    <property type="match status" value="1"/>
</dbReference>
<dbReference type="PROSITE" id="PS50151">
    <property type="entry name" value="UVR"/>
    <property type="match status" value="1"/>
</dbReference>
<dbReference type="PROSITE" id="PS50165">
    <property type="entry name" value="UVRC"/>
    <property type="match status" value="1"/>
</dbReference>
<sequence length="743" mass="80440">MTSPDAPESRFEPKPILAQLPHLPGVYRYYDAQDAVLYVGKARDLKKRVSSYFTKTQLSPRIAMMITRIARIETTVTRSEAEALLLENNLIKALAPRYNILFRDDKSYPYLKLTGHRFPRMAYYRGAVDKKNQYFGPFPSAWAVRESIQILQRVFQLRTCEDSVFNNRTRPCLLHQIGRCSAPCVGAIGEEDYARDVDNASRFLLGRQGEVMGELERKMHAFAAELKFEQAAAVRNQMSSLAKVLHQQAIDVGGDSDVDILAVVAQGGRVCVNLAMVRGGRHLGDKAYFPAHVETALALAGDIEALAGEGAGDGVQAAQAPLATDADATDAAATEAKTVTAAAAARAGARTAQAAGARAAASAEGDVERRAEGETHARADAREAAALPDGAAAAQEADADVDAAPLETEVLEAFIAQHYLGNRVPPVLVVSHAPANRELIDLLVEQAGHKVAVVRQPQGQKRAWLTMAEQNARLALARLLSEQGSQQARTRSLADVLGYESDDLAQLRIECFDISHTMGEATQASCVVYHHHRMQSSEYRRYNIAGITPGDDYAAMRQVLTRRYEKMVEEAAAEASADEAAGIDGNAVHAAASAGRLPNVVLIDGGRGQVEIARQVFSELGLDISMLVGVAKGEGRKVGLETLIFADGRAPLELGKESAALMLVAQIRDEAHRFAITGMRAKRAKTRQTSRLEELEGVGAKRRQRLLARFGGLRGVVAASVDELASVEGISRALAEQIYRQLH</sequence>
<feature type="chain" id="PRO_0000264878" description="UvrABC system protein C">
    <location>
        <begin position="1"/>
        <end position="743"/>
    </location>
</feature>
<feature type="domain" description="GIY-YIG" evidence="1">
    <location>
        <begin position="22"/>
        <end position="100"/>
    </location>
</feature>
<feature type="domain" description="UVR" evidence="1">
    <location>
        <begin position="209"/>
        <end position="244"/>
    </location>
</feature>
<evidence type="ECO:0000255" key="1">
    <source>
        <dbReference type="HAMAP-Rule" id="MF_00203"/>
    </source>
</evidence>
<evidence type="ECO:0000305" key="2"/>
<protein>
    <recommendedName>
        <fullName evidence="1">UvrABC system protein C</fullName>
        <shortName evidence="1">Protein UvrC</shortName>
    </recommendedName>
    <alternativeName>
        <fullName evidence="1">Excinuclease ABC subunit C</fullName>
    </alternativeName>
</protein>
<name>UVRC_BURPS</name>
<reference key="1">
    <citation type="journal article" date="2004" name="Proc. Natl. Acad. Sci. U.S.A.">
        <title>Genomic plasticity of the causative agent of melioidosis, Burkholderia pseudomallei.</title>
        <authorList>
            <person name="Holden M.T.G."/>
            <person name="Titball R.W."/>
            <person name="Peacock S.J."/>
            <person name="Cerdeno-Tarraga A.-M."/>
            <person name="Atkins T."/>
            <person name="Crossman L.C."/>
            <person name="Pitt T."/>
            <person name="Churcher C."/>
            <person name="Mungall K.L."/>
            <person name="Bentley S.D."/>
            <person name="Sebaihia M."/>
            <person name="Thomson N.R."/>
            <person name="Bason N."/>
            <person name="Beacham I.R."/>
            <person name="Brooks K."/>
            <person name="Brown K.A."/>
            <person name="Brown N.F."/>
            <person name="Challis G.L."/>
            <person name="Cherevach I."/>
            <person name="Chillingworth T."/>
            <person name="Cronin A."/>
            <person name="Crossett B."/>
            <person name="Davis P."/>
            <person name="DeShazer D."/>
            <person name="Feltwell T."/>
            <person name="Fraser A."/>
            <person name="Hance Z."/>
            <person name="Hauser H."/>
            <person name="Holroyd S."/>
            <person name="Jagels K."/>
            <person name="Keith K.E."/>
            <person name="Maddison M."/>
            <person name="Moule S."/>
            <person name="Price C."/>
            <person name="Quail M.A."/>
            <person name="Rabbinowitsch E."/>
            <person name="Rutherford K."/>
            <person name="Sanders M."/>
            <person name="Simmonds M."/>
            <person name="Songsivilai S."/>
            <person name="Stevens K."/>
            <person name="Tumapa S."/>
            <person name="Vesaratchavest M."/>
            <person name="Whitehead S."/>
            <person name="Yeats C."/>
            <person name="Barrell B.G."/>
            <person name="Oyston P.C.F."/>
            <person name="Parkhill J."/>
        </authorList>
    </citation>
    <scope>NUCLEOTIDE SEQUENCE [LARGE SCALE GENOMIC DNA]</scope>
    <source>
        <strain>K96243</strain>
    </source>
</reference>
<organism>
    <name type="scientific">Burkholderia pseudomallei (strain K96243)</name>
    <dbReference type="NCBI Taxonomy" id="272560"/>
    <lineage>
        <taxon>Bacteria</taxon>
        <taxon>Pseudomonadati</taxon>
        <taxon>Pseudomonadota</taxon>
        <taxon>Betaproteobacteria</taxon>
        <taxon>Burkholderiales</taxon>
        <taxon>Burkholderiaceae</taxon>
        <taxon>Burkholderia</taxon>
        <taxon>pseudomallei group</taxon>
    </lineage>
</organism>